<keyword id="KW-0963">Cytoplasm</keyword>
<keyword id="KW-0324">Glycolysis</keyword>
<keyword id="KW-0456">Lyase</keyword>
<keyword id="KW-0460">Magnesium</keyword>
<keyword id="KW-0479">Metal-binding</keyword>
<keyword id="KW-0964">Secreted</keyword>
<organism>
    <name type="scientific">Chelativorans sp. (strain BNC1)</name>
    <dbReference type="NCBI Taxonomy" id="266779"/>
    <lineage>
        <taxon>Bacteria</taxon>
        <taxon>Pseudomonadati</taxon>
        <taxon>Pseudomonadota</taxon>
        <taxon>Alphaproteobacteria</taxon>
        <taxon>Hyphomicrobiales</taxon>
        <taxon>Phyllobacteriaceae</taxon>
        <taxon>Chelativorans</taxon>
    </lineage>
</organism>
<feature type="chain" id="PRO_0000267053" description="Enolase">
    <location>
        <begin position="1"/>
        <end position="424"/>
    </location>
</feature>
<feature type="active site" description="Proton donor" evidence="1">
    <location>
        <position position="204"/>
    </location>
</feature>
<feature type="active site" description="Proton acceptor" evidence="1">
    <location>
        <position position="336"/>
    </location>
</feature>
<feature type="binding site" evidence="1">
    <location>
        <position position="162"/>
    </location>
    <ligand>
        <name>(2R)-2-phosphoglycerate</name>
        <dbReference type="ChEBI" id="CHEBI:58289"/>
    </ligand>
</feature>
<feature type="binding site" evidence="1">
    <location>
        <position position="241"/>
    </location>
    <ligand>
        <name>Mg(2+)</name>
        <dbReference type="ChEBI" id="CHEBI:18420"/>
    </ligand>
</feature>
<feature type="binding site" evidence="1">
    <location>
        <position position="284"/>
    </location>
    <ligand>
        <name>Mg(2+)</name>
        <dbReference type="ChEBI" id="CHEBI:18420"/>
    </ligand>
</feature>
<feature type="binding site" evidence="1">
    <location>
        <position position="311"/>
    </location>
    <ligand>
        <name>Mg(2+)</name>
        <dbReference type="ChEBI" id="CHEBI:18420"/>
    </ligand>
</feature>
<feature type="binding site" evidence="1">
    <location>
        <position position="336"/>
    </location>
    <ligand>
        <name>(2R)-2-phosphoglycerate</name>
        <dbReference type="ChEBI" id="CHEBI:58289"/>
    </ligand>
</feature>
<feature type="binding site" evidence="1">
    <location>
        <position position="365"/>
    </location>
    <ligand>
        <name>(2R)-2-phosphoglycerate</name>
        <dbReference type="ChEBI" id="CHEBI:58289"/>
    </ligand>
</feature>
<feature type="binding site" evidence="1">
    <location>
        <position position="366"/>
    </location>
    <ligand>
        <name>(2R)-2-phosphoglycerate</name>
        <dbReference type="ChEBI" id="CHEBI:58289"/>
    </ligand>
</feature>
<feature type="binding site" evidence="1">
    <location>
        <position position="387"/>
    </location>
    <ligand>
        <name>(2R)-2-phosphoglycerate</name>
        <dbReference type="ChEBI" id="CHEBI:58289"/>
    </ligand>
</feature>
<sequence length="424" mass="44654">MTAIVDIVGREILDSRGNPTVEVDVVLEDGSIGRAAVPSGASTGAHEAVELRDGGPRYLGKGVARAVEAVNGEIFEAIGGLEAEDQIHIDRTMIELDGTPNKSRLGANAILGVSLAVAKATAAASGLPLYRYVGGASAHILPVPMMNILNGGAHADNPIDFQEFMIMPVGAPTLRDAVRWGSEIFHTLKSGLKAAGHNTNVGDEGGFAPNLKDANAALDFIMASIEKAGFKPGDEVAIALDCAATEFFKDGKYVYEGEGQTRDAQAQAEYLSKLAGEYPIISIEDGMAEDDFEGWKALTDLAGSKVQLVGDDLFVTNAARLKDGINMGIANSILVKVNQIGSLTETLEAVETAHKAAYTAVMSHRSGETEDSTIADLAVATNCGQIKTGSLARSDRLAKYNQLIRIEEQLGRAARYAGRTVVRG</sequence>
<proteinExistence type="inferred from homology"/>
<reference key="1">
    <citation type="submission" date="2006-06" db="EMBL/GenBank/DDBJ databases">
        <title>Complete sequence of chromosome of Mesorhizobium sp. BNC1.</title>
        <authorList>
            <consortium name="US DOE Joint Genome Institute"/>
            <person name="Copeland A."/>
            <person name="Lucas S."/>
            <person name="Lapidus A."/>
            <person name="Barry K."/>
            <person name="Detter J.C."/>
            <person name="Glavina del Rio T."/>
            <person name="Hammon N."/>
            <person name="Israni S."/>
            <person name="Dalin E."/>
            <person name="Tice H."/>
            <person name="Pitluck S."/>
            <person name="Chertkov O."/>
            <person name="Brettin T."/>
            <person name="Bruce D."/>
            <person name="Han C."/>
            <person name="Tapia R."/>
            <person name="Gilna P."/>
            <person name="Schmutz J."/>
            <person name="Larimer F."/>
            <person name="Land M."/>
            <person name="Hauser L."/>
            <person name="Kyrpides N."/>
            <person name="Mikhailova N."/>
            <person name="Richardson P."/>
        </authorList>
    </citation>
    <scope>NUCLEOTIDE SEQUENCE [LARGE SCALE GENOMIC DNA]</scope>
    <source>
        <strain>BNC1</strain>
    </source>
</reference>
<name>ENO_CHESB</name>
<comment type="function">
    <text evidence="1">Catalyzes the reversible conversion of 2-phosphoglycerate (2-PG) into phosphoenolpyruvate (PEP). It is essential for the degradation of carbohydrates via glycolysis.</text>
</comment>
<comment type="catalytic activity">
    <reaction evidence="1">
        <text>(2R)-2-phosphoglycerate = phosphoenolpyruvate + H2O</text>
        <dbReference type="Rhea" id="RHEA:10164"/>
        <dbReference type="ChEBI" id="CHEBI:15377"/>
        <dbReference type="ChEBI" id="CHEBI:58289"/>
        <dbReference type="ChEBI" id="CHEBI:58702"/>
        <dbReference type="EC" id="4.2.1.11"/>
    </reaction>
</comment>
<comment type="cofactor">
    <cofactor evidence="1">
        <name>Mg(2+)</name>
        <dbReference type="ChEBI" id="CHEBI:18420"/>
    </cofactor>
    <text evidence="1">Binds a second Mg(2+) ion via substrate during catalysis.</text>
</comment>
<comment type="pathway">
    <text evidence="1">Carbohydrate degradation; glycolysis; pyruvate from D-glyceraldehyde 3-phosphate: step 4/5.</text>
</comment>
<comment type="subcellular location">
    <subcellularLocation>
        <location evidence="1">Cytoplasm</location>
    </subcellularLocation>
    <subcellularLocation>
        <location evidence="1">Secreted</location>
    </subcellularLocation>
    <subcellularLocation>
        <location evidence="1">Cell surface</location>
    </subcellularLocation>
    <text evidence="1">Fractions of enolase are present in both the cytoplasm and on the cell surface.</text>
</comment>
<comment type="similarity">
    <text evidence="1">Belongs to the enolase family.</text>
</comment>
<accession>Q11HU8</accession>
<protein>
    <recommendedName>
        <fullName evidence="1">Enolase</fullName>
        <ecNumber evidence="1">4.2.1.11</ecNumber>
    </recommendedName>
    <alternativeName>
        <fullName evidence="1">2-phospho-D-glycerate hydro-lyase</fullName>
    </alternativeName>
    <alternativeName>
        <fullName evidence="1">2-phosphoglycerate dehydratase</fullName>
    </alternativeName>
</protein>
<evidence type="ECO:0000255" key="1">
    <source>
        <dbReference type="HAMAP-Rule" id="MF_00318"/>
    </source>
</evidence>
<gene>
    <name evidence="1" type="primary">eno</name>
    <name type="ordered locus">Meso_1632</name>
</gene>
<dbReference type="EC" id="4.2.1.11" evidence="1"/>
<dbReference type="EMBL" id="CP000390">
    <property type="protein sequence ID" value="ABG63027.1"/>
    <property type="molecule type" value="Genomic_DNA"/>
</dbReference>
<dbReference type="SMR" id="Q11HU8"/>
<dbReference type="STRING" id="266779.Meso_1632"/>
<dbReference type="KEGG" id="mes:Meso_1632"/>
<dbReference type="eggNOG" id="COG0148">
    <property type="taxonomic scope" value="Bacteria"/>
</dbReference>
<dbReference type="HOGENOM" id="CLU_031223_2_1_5"/>
<dbReference type="OrthoDB" id="9804716at2"/>
<dbReference type="UniPathway" id="UPA00109">
    <property type="reaction ID" value="UER00187"/>
</dbReference>
<dbReference type="GO" id="GO:0009986">
    <property type="term" value="C:cell surface"/>
    <property type="evidence" value="ECO:0007669"/>
    <property type="project" value="UniProtKB-SubCell"/>
</dbReference>
<dbReference type="GO" id="GO:0005576">
    <property type="term" value="C:extracellular region"/>
    <property type="evidence" value="ECO:0007669"/>
    <property type="project" value="UniProtKB-SubCell"/>
</dbReference>
<dbReference type="GO" id="GO:0000015">
    <property type="term" value="C:phosphopyruvate hydratase complex"/>
    <property type="evidence" value="ECO:0007669"/>
    <property type="project" value="InterPro"/>
</dbReference>
<dbReference type="GO" id="GO:0000287">
    <property type="term" value="F:magnesium ion binding"/>
    <property type="evidence" value="ECO:0007669"/>
    <property type="project" value="UniProtKB-UniRule"/>
</dbReference>
<dbReference type="GO" id="GO:0004634">
    <property type="term" value="F:phosphopyruvate hydratase activity"/>
    <property type="evidence" value="ECO:0007669"/>
    <property type="project" value="UniProtKB-UniRule"/>
</dbReference>
<dbReference type="GO" id="GO:0006096">
    <property type="term" value="P:glycolytic process"/>
    <property type="evidence" value="ECO:0007669"/>
    <property type="project" value="UniProtKB-UniRule"/>
</dbReference>
<dbReference type="CDD" id="cd03313">
    <property type="entry name" value="enolase"/>
    <property type="match status" value="1"/>
</dbReference>
<dbReference type="FunFam" id="3.20.20.120:FF:000001">
    <property type="entry name" value="Enolase"/>
    <property type="match status" value="1"/>
</dbReference>
<dbReference type="FunFam" id="3.30.390.10:FF:000001">
    <property type="entry name" value="Enolase"/>
    <property type="match status" value="1"/>
</dbReference>
<dbReference type="Gene3D" id="3.20.20.120">
    <property type="entry name" value="Enolase-like C-terminal domain"/>
    <property type="match status" value="1"/>
</dbReference>
<dbReference type="Gene3D" id="3.30.390.10">
    <property type="entry name" value="Enolase-like, N-terminal domain"/>
    <property type="match status" value="1"/>
</dbReference>
<dbReference type="HAMAP" id="MF_00318">
    <property type="entry name" value="Enolase"/>
    <property type="match status" value="1"/>
</dbReference>
<dbReference type="InterPro" id="IPR000941">
    <property type="entry name" value="Enolase"/>
</dbReference>
<dbReference type="InterPro" id="IPR036849">
    <property type="entry name" value="Enolase-like_C_sf"/>
</dbReference>
<dbReference type="InterPro" id="IPR029017">
    <property type="entry name" value="Enolase-like_N"/>
</dbReference>
<dbReference type="InterPro" id="IPR020810">
    <property type="entry name" value="Enolase_C"/>
</dbReference>
<dbReference type="InterPro" id="IPR020809">
    <property type="entry name" value="Enolase_CS"/>
</dbReference>
<dbReference type="InterPro" id="IPR020811">
    <property type="entry name" value="Enolase_N"/>
</dbReference>
<dbReference type="NCBIfam" id="TIGR01060">
    <property type="entry name" value="eno"/>
    <property type="match status" value="1"/>
</dbReference>
<dbReference type="PANTHER" id="PTHR11902">
    <property type="entry name" value="ENOLASE"/>
    <property type="match status" value="1"/>
</dbReference>
<dbReference type="PANTHER" id="PTHR11902:SF1">
    <property type="entry name" value="ENOLASE"/>
    <property type="match status" value="1"/>
</dbReference>
<dbReference type="Pfam" id="PF00113">
    <property type="entry name" value="Enolase_C"/>
    <property type="match status" value="1"/>
</dbReference>
<dbReference type="Pfam" id="PF03952">
    <property type="entry name" value="Enolase_N"/>
    <property type="match status" value="1"/>
</dbReference>
<dbReference type="PIRSF" id="PIRSF001400">
    <property type="entry name" value="Enolase"/>
    <property type="match status" value="1"/>
</dbReference>
<dbReference type="PRINTS" id="PR00148">
    <property type="entry name" value="ENOLASE"/>
</dbReference>
<dbReference type="SFLD" id="SFLDF00002">
    <property type="entry name" value="enolase"/>
    <property type="match status" value="1"/>
</dbReference>
<dbReference type="SFLD" id="SFLDG00178">
    <property type="entry name" value="enolase"/>
    <property type="match status" value="1"/>
</dbReference>
<dbReference type="SMART" id="SM01192">
    <property type="entry name" value="Enolase_C"/>
    <property type="match status" value="1"/>
</dbReference>
<dbReference type="SMART" id="SM01193">
    <property type="entry name" value="Enolase_N"/>
    <property type="match status" value="1"/>
</dbReference>
<dbReference type="SUPFAM" id="SSF51604">
    <property type="entry name" value="Enolase C-terminal domain-like"/>
    <property type="match status" value="1"/>
</dbReference>
<dbReference type="SUPFAM" id="SSF54826">
    <property type="entry name" value="Enolase N-terminal domain-like"/>
    <property type="match status" value="1"/>
</dbReference>
<dbReference type="PROSITE" id="PS00164">
    <property type="entry name" value="ENOLASE"/>
    <property type="match status" value="1"/>
</dbReference>